<proteinExistence type="inferred from homology"/>
<keyword id="KW-0240">DNA-directed RNA polymerase</keyword>
<keyword id="KW-0548">Nucleotidyltransferase</keyword>
<keyword id="KW-1185">Reference proteome</keyword>
<keyword id="KW-0804">Transcription</keyword>
<keyword id="KW-0808">Transferase</keyword>
<organism>
    <name type="scientific">Aquifex aeolicus (strain VF5)</name>
    <dbReference type="NCBI Taxonomy" id="224324"/>
    <lineage>
        <taxon>Bacteria</taxon>
        <taxon>Pseudomonadati</taxon>
        <taxon>Aquificota</taxon>
        <taxon>Aquificia</taxon>
        <taxon>Aquificales</taxon>
        <taxon>Aquificaceae</taxon>
        <taxon>Aquifex</taxon>
    </lineage>
</organism>
<reference key="1">
    <citation type="journal article" date="1998" name="Nature">
        <title>The complete genome of the hyperthermophilic bacterium Aquifex aeolicus.</title>
        <authorList>
            <person name="Deckert G."/>
            <person name="Warren P.V."/>
            <person name="Gaasterland T."/>
            <person name="Young W.G."/>
            <person name="Lenox A.L."/>
            <person name="Graham D.E."/>
            <person name="Overbeek R."/>
            <person name="Snead M.A."/>
            <person name="Keller M."/>
            <person name="Aujay M."/>
            <person name="Huber R."/>
            <person name="Feldman R.A."/>
            <person name="Short J.M."/>
            <person name="Olsen G.J."/>
            <person name="Swanson R.V."/>
        </authorList>
    </citation>
    <scope>NUCLEOTIDE SEQUENCE [LARGE SCALE GENOMIC DNA]</scope>
    <source>
        <strain>VF5</strain>
    </source>
</reference>
<dbReference type="EC" id="2.7.7.6" evidence="1"/>
<dbReference type="EMBL" id="AE000657">
    <property type="protein sequence ID" value="AAC07723.1"/>
    <property type="molecule type" value="Genomic_DNA"/>
</dbReference>
<dbReference type="PIR" id="F70466">
    <property type="entry name" value="F70466"/>
</dbReference>
<dbReference type="RefSeq" id="NP_214331.1">
    <property type="nucleotide sequence ID" value="NC_000918.1"/>
</dbReference>
<dbReference type="RefSeq" id="WP_010881267.1">
    <property type="nucleotide sequence ID" value="NC_000918.1"/>
</dbReference>
<dbReference type="SMR" id="O67762"/>
<dbReference type="FunCoup" id="O67762">
    <property type="interactions" value="447"/>
</dbReference>
<dbReference type="STRING" id="224324.aq_1939"/>
<dbReference type="EnsemblBacteria" id="AAC07723">
    <property type="protein sequence ID" value="AAC07723"/>
    <property type="gene ID" value="aq_1939"/>
</dbReference>
<dbReference type="KEGG" id="aae:aq_1939"/>
<dbReference type="PATRIC" id="fig|224324.8.peg.1501"/>
<dbReference type="eggNOG" id="COG0085">
    <property type="taxonomic scope" value="Bacteria"/>
</dbReference>
<dbReference type="HOGENOM" id="CLU_000524_4_1_0"/>
<dbReference type="InParanoid" id="O67762"/>
<dbReference type="OrthoDB" id="9803954at2"/>
<dbReference type="Proteomes" id="UP000000798">
    <property type="component" value="Chromosome"/>
</dbReference>
<dbReference type="GO" id="GO:0000428">
    <property type="term" value="C:DNA-directed RNA polymerase complex"/>
    <property type="evidence" value="ECO:0007669"/>
    <property type="project" value="UniProtKB-KW"/>
</dbReference>
<dbReference type="GO" id="GO:0003677">
    <property type="term" value="F:DNA binding"/>
    <property type="evidence" value="ECO:0007669"/>
    <property type="project" value="UniProtKB-UniRule"/>
</dbReference>
<dbReference type="GO" id="GO:0003899">
    <property type="term" value="F:DNA-directed RNA polymerase activity"/>
    <property type="evidence" value="ECO:0007669"/>
    <property type="project" value="UniProtKB-UniRule"/>
</dbReference>
<dbReference type="GO" id="GO:0032549">
    <property type="term" value="F:ribonucleoside binding"/>
    <property type="evidence" value="ECO:0007669"/>
    <property type="project" value="InterPro"/>
</dbReference>
<dbReference type="GO" id="GO:0006351">
    <property type="term" value="P:DNA-templated transcription"/>
    <property type="evidence" value="ECO:0007669"/>
    <property type="project" value="UniProtKB-UniRule"/>
</dbReference>
<dbReference type="CDD" id="cd00653">
    <property type="entry name" value="RNA_pol_B_RPB2"/>
    <property type="match status" value="1"/>
</dbReference>
<dbReference type="FunFam" id="2.40.50.100:FF:000006">
    <property type="entry name" value="DNA-directed RNA polymerase subunit beta"/>
    <property type="match status" value="1"/>
</dbReference>
<dbReference type="FunFam" id="3.90.1800.10:FF:000001">
    <property type="entry name" value="DNA-directed RNA polymerase subunit beta"/>
    <property type="match status" value="1"/>
</dbReference>
<dbReference type="Gene3D" id="2.40.50.100">
    <property type="match status" value="1"/>
</dbReference>
<dbReference type="Gene3D" id="2.40.50.150">
    <property type="match status" value="1"/>
</dbReference>
<dbReference type="Gene3D" id="3.90.1100.10">
    <property type="match status" value="2"/>
</dbReference>
<dbReference type="Gene3D" id="2.30.150.10">
    <property type="entry name" value="DNA-directed RNA polymerase, beta subunit, external 1 domain"/>
    <property type="match status" value="1"/>
</dbReference>
<dbReference type="Gene3D" id="2.40.270.10">
    <property type="entry name" value="DNA-directed RNA polymerase, subunit 2, domain 6"/>
    <property type="match status" value="1"/>
</dbReference>
<dbReference type="Gene3D" id="3.90.1800.10">
    <property type="entry name" value="RNA polymerase alpha subunit dimerisation domain"/>
    <property type="match status" value="1"/>
</dbReference>
<dbReference type="Gene3D" id="3.90.1110.10">
    <property type="entry name" value="RNA polymerase Rpb2, domain 2"/>
    <property type="match status" value="1"/>
</dbReference>
<dbReference type="HAMAP" id="MF_01321">
    <property type="entry name" value="RNApol_bact_RpoB"/>
    <property type="match status" value="1"/>
</dbReference>
<dbReference type="InterPro" id="IPR042107">
    <property type="entry name" value="DNA-dir_RNA_pol_bsu_ext_1_sf"/>
</dbReference>
<dbReference type="InterPro" id="IPR019462">
    <property type="entry name" value="DNA-dir_RNA_pol_bsu_external_1"/>
</dbReference>
<dbReference type="InterPro" id="IPR015712">
    <property type="entry name" value="DNA-dir_RNA_pol_su2"/>
</dbReference>
<dbReference type="InterPro" id="IPR007120">
    <property type="entry name" value="DNA-dir_RNAP_su2_dom"/>
</dbReference>
<dbReference type="InterPro" id="IPR037033">
    <property type="entry name" value="DNA-dir_RNAP_su2_hyb_sf"/>
</dbReference>
<dbReference type="InterPro" id="IPR010243">
    <property type="entry name" value="RNA_pol_bsu_bac"/>
</dbReference>
<dbReference type="InterPro" id="IPR007121">
    <property type="entry name" value="RNA_pol_bsu_CS"/>
</dbReference>
<dbReference type="InterPro" id="IPR007644">
    <property type="entry name" value="RNA_pol_bsu_protrusion"/>
</dbReference>
<dbReference type="InterPro" id="IPR007642">
    <property type="entry name" value="RNA_pol_Rpb2_2"/>
</dbReference>
<dbReference type="InterPro" id="IPR037034">
    <property type="entry name" value="RNA_pol_Rpb2_2_sf"/>
</dbReference>
<dbReference type="InterPro" id="IPR007645">
    <property type="entry name" value="RNA_pol_Rpb2_3"/>
</dbReference>
<dbReference type="InterPro" id="IPR007641">
    <property type="entry name" value="RNA_pol_Rpb2_7"/>
</dbReference>
<dbReference type="InterPro" id="IPR014724">
    <property type="entry name" value="RNA_pol_RPB2_OB-fold"/>
</dbReference>
<dbReference type="NCBIfam" id="NF001616">
    <property type="entry name" value="PRK00405.1"/>
    <property type="match status" value="1"/>
</dbReference>
<dbReference type="NCBIfam" id="TIGR02013">
    <property type="entry name" value="rpoB"/>
    <property type="match status" value="1"/>
</dbReference>
<dbReference type="PANTHER" id="PTHR20856">
    <property type="entry name" value="DNA-DIRECTED RNA POLYMERASE I SUBUNIT 2"/>
    <property type="match status" value="1"/>
</dbReference>
<dbReference type="Pfam" id="PF04563">
    <property type="entry name" value="RNA_pol_Rpb2_1"/>
    <property type="match status" value="1"/>
</dbReference>
<dbReference type="Pfam" id="PF04561">
    <property type="entry name" value="RNA_pol_Rpb2_2"/>
    <property type="match status" value="1"/>
</dbReference>
<dbReference type="Pfam" id="PF04565">
    <property type="entry name" value="RNA_pol_Rpb2_3"/>
    <property type="match status" value="1"/>
</dbReference>
<dbReference type="Pfam" id="PF10385">
    <property type="entry name" value="RNA_pol_Rpb2_45"/>
    <property type="match status" value="1"/>
</dbReference>
<dbReference type="Pfam" id="PF00562">
    <property type="entry name" value="RNA_pol_Rpb2_6"/>
    <property type="match status" value="1"/>
</dbReference>
<dbReference type="Pfam" id="PF04560">
    <property type="entry name" value="RNA_pol_Rpb2_7"/>
    <property type="match status" value="1"/>
</dbReference>
<dbReference type="SUPFAM" id="SSF64484">
    <property type="entry name" value="beta and beta-prime subunits of DNA dependent RNA-polymerase"/>
    <property type="match status" value="1"/>
</dbReference>
<dbReference type="PROSITE" id="PS01166">
    <property type="entry name" value="RNA_POL_BETA"/>
    <property type="match status" value="1"/>
</dbReference>
<gene>
    <name evidence="1" type="primary">rpoB</name>
    <name type="ordered locus">aq_1939</name>
</gene>
<accession>O67762</accession>
<feature type="chain" id="PRO_0000047855" description="DNA-directed RNA polymerase subunit beta">
    <location>
        <begin position="1"/>
        <end position="1468"/>
    </location>
</feature>
<name>RPOB_AQUAE</name>
<evidence type="ECO:0000255" key="1">
    <source>
        <dbReference type="HAMAP-Rule" id="MF_01321"/>
    </source>
</evidence>
<sequence length="1468" mass="167388">MAKIALPRKFFGRRFEVLEPPYLLSIPKNSFENFVQLKVNPYKRKNVGLEHIFRTSFPFKDPDENFILEYLGYEIGDWECNRCGYKPKDDLLGGWDVDCPQCGAKLVYKEKFTPEECKLKGLTYSAPLRVMLQLKAKTKNGYREFPPKKVYFGEIPLMTETGSFIINGTERIIINQLIRSSGVFFDEKEEKQKDATITRILYRGSIIPDKGSRVEFELSGATDLISARIDRKKLSATAVLRAFGLETAYDILKYFYEDVRKFIVKDKYLYDAQTGEEFTPEDLEHHYIFAIIKFRGKLVGFASSKERDFIEERYIEEWEDLVRLLDDDRIEVLSVTAVPRDVVIKSPYGKSLIDTLANDTSPKDVDKRSPVKVPAEYTLRDYGLMEMYKRLRHIEAITMEIDSVIERARIFFNVFFRDLKRYDLSRVGRVKINAKVHRIPKVLKPADVDLLDQLPPLALAEDYGEYKAGTRVTKDLLKELFKQYKEIKVKDYTEDEARFILPIDLVNILKYLIDLRHGRVKKDDIAHLGNRRVRSVGELLENQARLGIAKMEKVFRDRSAVINPEQPDLKPQDFINPRYVTTAITDFLKTGQLSQYLDNTNPLSELTHKRRLSALGPGGLTRESAKFEIRDVHPSHYGRICPIETPEGQNIGLVTSPTVYARVNEYGFLITPYRKVENGKVTDKIEWLAAYEEENYVIAQSTPTDEEGRLKAEFILARHKNDIRLVKPEQVEYIDVSPRQVISPSSSLIPFLEHDDANRALMGSNMQRQAVPLIFTQAPLIGTGMEKKIARDSHAVVVAKRGGVVEEVDSSKIIIRVNPEEINFDDPLDIGIDIYELRKFQRTNQKTCVNQRPIVRKGEKVEKGQIIADGHSTDRGELALGKDVLVAFMPWRGYNFEDAIVISERLVKEDVYTSIHIEELEVEARETKVGEEEITRQIPGVPERALAHLDEHGIVRVGTYVKPGDILVGKVTPKGETRLTPEEKLLQAIFGEKTRDVKDASLRCPPGVEGIVIDVQVFTRKGTGKKDMLAEKVEREELEALEQELEKKKNLIITGRDKVLKGLVLGRKVEKDAKVGRKTVKKGTVIDEKVFEEFVNYILGRPENFFEDEDLIRKIREIAERTRTQIEMLNKVYEEKKETLLKRRDLPPGVITLVKVFIANKRKIKVGDKMAGRHGNKGVISVVLPVEDMPFLPDGTPVDIVLNPLGVPSRMNVGQILETHLGWAAKELGKKIGEMIEKGRDRKAITEYLKEIFAIGDKDGENAKFIEEFLNSLSEEEFWSVVRDYAERGIPMATPAFEGAEEDAIKELLKKAGLPENGKTTLYDGRTGEPFDFEVTVGYMHMLKLIHMVDDKIHARATGPYSLVTQQPLGGRAQFGGQRLGEMEVWALEAHGAAYTLQEMLTVKSDDVEGRTKVYEAIVKGKYTYTPGIPESFKVLVRELKALGLNVKCLNGEEKPCDEVEVKEEEEK</sequence>
<comment type="function">
    <text evidence="1">DNA-dependent RNA polymerase catalyzes the transcription of DNA into RNA using the four ribonucleoside triphosphates as substrates.</text>
</comment>
<comment type="catalytic activity">
    <reaction evidence="1">
        <text>RNA(n) + a ribonucleoside 5'-triphosphate = RNA(n+1) + diphosphate</text>
        <dbReference type="Rhea" id="RHEA:21248"/>
        <dbReference type="Rhea" id="RHEA-COMP:14527"/>
        <dbReference type="Rhea" id="RHEA-COMP:17342"/>
        <dbReference type="ChEBI" id="CHEBI:33019"/>
        <dbReference type="ChEBI" id="CHEBI:61557"/>
        <dbReference type="ChEBI" id="CHEBI:140395"/>
        <dbReference type="EC" id="2.7.7.6"/>
    </reaction>
</comment>
<comment type="subunit">
    <text evidence="1">The RNAP catalytic core consists of 2 alpha, 1 beta, 1 beta' and 1 omega subunit. When a sigma factor is associated with the core the holoenzyme is formed, which can initiate transcription.</text>
</comment>
<comment type="similarity">
    <text evidence="1">Belongs to the RNA polymerase beta chain family.</text>
</comment>
<protein>
    <recommendedName>
        <fullName evidence="1">DNA-directed RNA polymerase subunit beta</fullName>
        <shortName evidence="1">RNAP subunit beta</shortName>
        <ecNumber evidence="1">2.7.7.6</ecNumber>
    </recommendedName>
    <alternativeName>
        <fullName evidence="1">RNA polymerase subunit beta</fullName>
    </alternativeName>
    <alternativeName>
        <fullName evidence="1">Transcriptase subunit beta</fullName>
    </alternativeName>
</protein>